<name>Y678_TREPA</name>
<sequence>MEAYQAEIIRRFGRVRRARGFYLYTERGVRITDLFLDGGASILGRNASRARLDFKRYLSRGLWGPLPTCASAQLQQALRTCFPAHEVRYYAHAERAQEVCARFLNLACGAAPCEVPVWRPCAPCVPQTDVFLVVPPFPSPAPFVALRAHCAARAPAGDVLFAPIAQAIARAFWDLARVGSLSQPARAMPHALLDSSHTTQEDAVPALPHTKKRRRGLNRVRRAQKCARQERDRAQLITLMSTWWRTEGPYLFPTVSEERYEALFARALDAHILLSPLYTEPSVLPTLEHYTQLCTFFLQEQEKEHHE</sequence>
<proteinExistence type="predicted"/>
<keyword id="KW-1185">Reference proteome</keyword>
<gene>
    <name type="ordered locus">TP_0678</name>
</gene>
<comment type="similarity">
    <text evidence="1">To B.burgdorferi BB0340.</text>
</comment>
<accession>O83684</accession>
<protein>
    <recommendedName>
        <fullName>Uncharacterized protein TP_0678</fullName>
    </recommendedName>
</protein>
<feature type="chain" id="PRO_0000202303" description="Uncharacterized protein TP_0678">
    <location>
        <begin position="1"/>
        <end position="307"/>
    </location>
</feature>
<reference key="1">
    <citation type="journal article" date="1998" name="Science">
        <title>Complete genome sequence of Treponema pallidum, the syphilis spirochete.</title>
        <authorList>
            <person name="Fraser C.M."/>
            <person name="Norris S.J."/>
            <person name="Weinstock G.M."/>
            <person name="White O."/>
            <person name="Sutton G.G."/>
            <person name="Dodson R.J."/>
            <person name="Gwinn M.L."/>
            <person name="Hickey E.K."/>
            <person name="Clayton R.A."/>
            <person name="Ketchum K.A."/>
            <person name="Sodergren E."/>
            <person name="Hardham J.M."/>
            <person name="McLeod M.P."/>
            <person name="Salzberg S.L."/>
            <person name="Peterson J.D."/>
            <person name="Khalak H.G."/>
            <person name="Richardson D.L."/>
            <person name="Howell J.K."/>
            <person name="Chidambaram M."/>
            <person name="Utterback T.R."/>
            <person name="McDonald L.A."/>
            <person name="Artiach P."/>
            <person name="Bowman C."/>
            <person name="Cotton M.D."/>
            <person name="Fujii C."/>
            <person name="Garland S.A."/>
            <person name="Hatch B."/>
            <person name="Horst K."/>
            <person name="Roberts K.M."/>
            <person name="Sandusky M."/>
            <person name="Weidman J.F."/>
            <person name="Smith H.O."/>
            <person name="Venter J.C."/>
        </authorList>
    </citation>
    <scope>NUCLEOTIDE SEQUENCE [LARGE SCALE GENOMIC DNA]</scope>
    <source>
        <strain>Nichols</strain>
    </source>
</reference>
<organism>
    <name type="scientific">Treponema pallidum (strain Nichols)</name>
    <dbReference type="NCBI Taxonomy" id="243276"/>
    <lineage>
        <taxon>Bacteria</taxon>
        <taxon>Pseudomonadati</taxon>
        <taxon>Spirochaetota</taxon>
        <taxon>Spirochaetia</taxon>
        <taxon>Spirochaetales</taxon>
        <taxon>Treponemataceae</taxon>
        <taxon>Treponema</taxon>
    </lineage>
</organism>
<evidence type="ECO:0000305" key="1"/>
<dbReference type="EMBL" id="AE000520">
    <property type="protein sequence ID" value="AAC65654.1"/>
    <property type="molecule type" value="Genomic_DNA"/>
</dbReference>
<dbReference type="PIR" id="F71294">
    <property type="entry name" value="F71294"/>
</dbReference>
<dbReference type="RefSeq" id="WP_010882123.1">
    <property type="nucleotide sequence ID" value="NC_021490.2"/>
</dbReference>
<dbReference type="IntAct" id="O83684">
    <property type="interactions" value="1"/>
</dbReference>
<dbReference type="STRING" id="243276.TP_0678"/>
<dbReference type="EnsemblBacteria" id="AAC65654">
    <property type="protein sequence ID" value="AAC65654"/>
    <property type="gene ID" value="TP_0678"/>
</dbReference>
<dbReference type="KEGG" id="tpa:TP_0678"/>
<dbReference type="KEGG" id="tpw:TPANIC_0678"/>
<dbReference type="eggNOG" id="COG0001">
    <property type="taxonomic scope" value="Bacteria"/>
</dbReference>
<dbReference type="HOGENOM" id="CLU_082735_0_0_12"/>
<dbReference type="OrthoDB" id="356614at2"/>
<dbReference type="Proteomes" id="UP000000811">
    <property type="component" value="Chromosome"/>
</dbReference>